<keyword id="KW-0067">ATP-binding</keyword>
<keyword id="KW-0997">Cell inner membrane</keyword>
<keyword id="KW-1003">Cell membrane</keyword>
<keyword id="KW-0472">Membrane</keyword>
<keyword id="KW-0547">Nucleotide-binding</keyword>
<keyword id="KW-0918">Phosphonate transport</keyword>
<keyword id="KW-1185">Reference proteome</keyword>
<keyword id="KW-1278">Translocase</keyword>
<keyword id="KW-0813">Transport</keyword>
<organism>
    <name type="scientific">Cupriavidus necator (strain ATCC 17699 / DSM 428 / KCTC 22496 / NCIMB 10442 / H16 / Stanier 337)</name>
    <name type="common">Ralstonia eutropha</name>
    <dbReference type="NCBI Taxonomy" id="381666"/>
    <lineage>
        <taxon>Bacteria</taxon>
        <taxon>Pseudomonadati</taxon>
        <taxon>Pseudomonadota</taxon>
        <taxon>Betaproteobacteria</taxon>
        <taxon>Burkholderiales</taxon>
        <taxon>Burkholderiaceae</taxon>
        <taxon>Cupriavidus</taxon>
    </lineage>
</organism>
<comment type="function">
    <text evidence="1">Part of the ABC transporter complex PhnCDE involved in phosphonates import. Responsible for energy coupling to the transport system.</text>
</comment>
<comment type="catalytic activity">
    <reaction evidence="1">
        <text>phosphonate(out) + ATP + H2O = phosphonate(in) + ADP + phosphate + H(+)</text>
        <dbReference type="Rhea" id="RHEA:18065"/>
        <dbReference type="ChEBI" id="CHEBI:15377"/>
        <dbReference type="ChEBI" id="CHEBI:15378"/>
        <dbReference type="ChEBI" id="CHEBI:16215"/>
        <dbReference type="ChEBI" id="CHEBI:30616"/>
        <dbReference type="ChEBI" id="CHEBI:43474"/>
        <dbReference type="ChEBI" id="CHEBI:456216"/>
        <dbReference type="EC" id="7.3.2.2"/>
    </reaction>
</comment>
<comment type="subunit">
    <text evidence="1">The complex is composed of two ATP-binding proteins (PhnC), two transmembrane proteins (PhnE) and a solute-binding protein (PhnD).</text>
</comment>
<comment type="subcellular location">
    <subcellularLocation>
        <location evidence="1">Cell inner membrane</location>
        <topology evidence="1">Peripheral membrane protein</topology>
    </subcellularLocation>
</comment>
<comment type="similarity">
    <text evidence="1">Belongs to the ABC transporter superfamily. Phosphonates importer (TC 3.A.1.9.1) family.</text>
</comment>
<protein>
    <recommendedName>
        <fullName evidence="1">Phosphonates import ATP-binding protein PhnC 1</fullName>
        <ecNumber evidence="1">7.3.2.2</ecNumber>
    </recommendedName>
</protein>
<reference key="1">
    <citation type="journal article" date="2006" name="Nat. Biotechnol.">
        <title>Genome sequence of the bioplastic-producing 'Knallgas' bacterium Ralstonia eutropha H16.</title>
        <authorList>
            <person name="Pohlmann A."/>
            <person name="Fricke W.F."/>
            <person name="Reinecke F."/>
            <person name="Kusian B."/>
            <person name="Liesegang H."/>
            <person name="Cramm R."/>
            <person name="Eitinger T."/>
            <person name="Ewering C."/>
            <person name="Poetter M."/>
            <person name="Schwartz E."/>
            <person name="Strittmatter A."/>
            <person name="Voss I."/>
            <person name="Gottschalk G."/>
            <person name="Steinbuechel A."/>
            <person name="Friedrich B."/>
            <person name="Bowien B."/>
        </authorList>
    </citation>
    <scope>NUCLEOTIDE SEQUENCE [LARGE SCALE GENOMIC DNA]</scope>
    <source>
        <strain>ATCC 17699 / DSM 428 / KCTC 22496 / NCIMB 10442 / H16 / Stanier 337</strain>
    </source>
</reference>
<name>PHNC1_CUPNH</name>
<evidence type="ECO:0000255" key="1">
    <source>
        <dbReference type="HAMAP-Rule" id="MF_01713"/>
    </source>
</evidence>
<sequence length="280" mass="29873">MSFRLDAASVSYANGQRALSQITLAASRGEPIAVIGPSGAGKTSLLRLLATSLRPSEGRVEVLEQSPWAVSAARLQQLRCRIGMVHQAPPMPPRQRVVTAILAGRLGIWPAWKSLLSLVYPADIDGAGEQLARLELADRLFDRCDQLSGGQLQRVGVARVLYQRPELILADEPVSAMDPVLANLTLGELRREADTRAVPLVASLHAVDLALRWFPRIVGLKAGEIAFDLPAERVTDALLRELYASESASPPVQGSQALTSIAAGASAAIGGDTQPRPACR</sequence>
<proteinExistence type="inferred from homology"/>
<feature type="chain" id="PRO_0000274732" description="Phosphonates import ATP-binding protein PhnC 1">
    <location>
        <begin position="1"/>
        <end position="280"/>
    </location>
</feature>
<feature type="domain" description="ABC transporter" evidence="1">
    <location>
        <begin position="3"/>
        <end position="247"/>
    </location>
</feature>
<feature type="binding site" evidence="1">
    <location>
        <begin position="36"/>
        <end position="43"/>
    </location>
    <ligand>
        <name>ATP</name>
        <dbReference type="ChEBI" id="CHEBI:30616"/>
    </ligand>
</feature>
<gene>
    <name evidence="1" type="primary">phnC1</name>
    <name type="ordered locus">H16_B0293</name>
</gene>
<accession>Q0K4I1</accession>
<dbReference type="EC" id="7.3.2.2" evidence="1"/>
<dbReference type="EMBL" id="AM260480">
    <property type="protein sequence ID" value="CAJ95093.1"/>
    <property type="molecule type" value="Genomic_DNA"/>
</dbReference>
<dbReference type="RefSeq" id="WP_010812637.1">
    <property type="nucleotide sequence ID" value="NZ_CP039288.1"/>
</dbReference>
<dbReference type="SMR" id="Q0K4I1"/>
<dbReference type="STRING" id="381666.H16_B0293"/>
<dbReference type="KEGG" id="reh:H16_B0293"/>
<dbReference type="eggNOG" id="COG3638">
    <property type="taxonomic scope" value="Bacteria"/>
</dbReference>
<dbReference type="HOGENOM" id="CLU_000604_1_22_4"/>
<dbReference type="OrthoDB" id="9802264at2"/>
<dbReference type="Proteomes" id="UP000008210">
    <property type="component" value="Chromosome 2"/>
</dbReference>
<dbReference type="GO" id="GO:0005886">
    <property type="term" value="C:plasma membrane"/>
    <property type="evidence" value="ECO:0007669"/>
    <property type="project" value="UniProtKB-SubCell"/>
</dbReference>
<dbReference type="GO" id="GO:0015416">
    <property type="term" value="F:ABC-type phosphonate transporter activity"/>
    <property type="evidence" value="ECO:0007669"/>
    <property type="project" value="UniProtKB-EC"/>
</dbReference>
<dbReference type="GO" id="GO:0005524">
    <property type="term" value="F:ATP binding"/>
    <property type="evidence" value="ECO:0007669"/>
    <property type="project" value="UniProtKB-KW"/>
</dbReference>
<dbReference type="GO" id="GO:0016887">
    <property type="term" value="F:ATP hydrolysis activity"/>
    <property type="evidence" value="ECO:0007669"/>
    <property type="project" value="InterPro"/>
</dbReference>
<dbReference type="Gene3D" id="3.40.50.300">
    <property type="entry name" value="P-loop containing nucleotide triphosphate hydrolases"/>
    <property type="match status" value="1"/>
</dbReference>
<dbReference type="InterPro" id="IPR003593">
    <property type="entry name" value="AAA+_ATPase"/>
</dbReference>
<dbReference type="InterPro" id="IPR003439">
    <property type="entry name" value="ABC_transporter-like_ATP-bd"/>
</dbReference>
<dbReference type="InterPro" id="IPR017871">
    <property type="entry name" value="ABC_transporter-like_CS"/>
</dbReference>
<dbReference type="InterPro" id="IPR050086">
    <property type="entry name" value="MetN_ABC_transporter-like"/>
</dbReference>
<dbReference type="InterPro" id="IPR027417">
    <property type="entry name" value="P-loop_NTPase"/>
</dbReference>
<dbReference type="PANTHER" id="PTHR43166">
    <property type="entry name" value="AMINO ACID IMPORT ATP-BINDING PROTEIN"/>
    <property type="match status" value="1"/>
</dbReference>
<dbReference type="PANTHER" id="PTHR43166:SF6">
    <property type="entry name" value="PHOSPHONATES IMPORT ATP-BINDING PROTEIN PHNC"/>
    <property type="match status" value="1"/>
</dbReference>
<dbReference type="Pfam" id="PF00005">
    <property type="entry name" value="ABC_tran"/>
    <property type="match status" value="1"/>
</dbReference>
<dbReference type="SMART" id="SM00382">
    <property type="entry name" value="AAA"/>
    <property type="match status" value="1"/>
</dbReference>
<dbReference type="SUPFAM" id="SSF52540">
    <property type="entry name" value="P-loop containing nucleoside triphosphate hydrolases"/>
    <property type="match status" value="1"/>
</dbReference>
<dbReference type="PROSITE" id="PS00211">
    <property type="entry name" value="ABC_TRANSPORTER_1"/>
    <property type="match status" value="1"/>
</dbReference>
<dbReference type="PROSITE" id="PS50893">
    <property type="entry name" value="ABC_TRANSPORTER_2"/>
    <property type="match status" value="1"/>
</dbReference>
<dbReference type="PROSITE" id="PS51249">
    <property type="entry name" value="PHNC"/>
    <property type="match status" value="1"/>
</dbReference>